<sequence>MPSETAQAGEGPAGCPHLSGAQGSDRSLDQRPPGNKDAPERVWIRPDVPSRCTWELGRPVADSPHQHAALAKSPKILPDILQKIGDTPMVRINKIGKNFGLKCELLAKCEFFNAGGSVKDRISLRMIEDAERAGTLRPGDTIIEPTSGNTGIGLALAAAVKGYRCIIVMPEKMSLEKVDVLRALGAEIVRTPTNARFDSPESHVGVAWRLKQEIPNSHILDQYRNASNPLAHYDTTAEEILQQCDGKLDMLVASAGTGGTITGIARKLKEKCPGCQIIGVDPEGSILAEPEELNQTEVTAYEVEGIGYDFIPTVLDRTVVDRWFKSTDKEAFAFARMLIAQEGLLCGGSAGSAVAVAVKAAQELQEGQRCVVILPDSVRNYMSKFLSDRWMLQKGFLEEEELSVKRPWWWHLRVQELSLSVPLTVLPGVTCSDTIDILRGKGFDQAPVVDETGEILGMVTLGNMLSSLLAGKVQPSDQVCKVLYKQFKQIRLTDTLGALSHILEMDHFALVVHEQIQYGGDEQPSKRQTVFGVVTAMDLLHFVASRGQDQQ</sequence>
<name>CBS_RABIT</name>
<evidence type="ECO:0000250" key="1">
    <source>
        <dbReference type="UniProtKB" id="P32232"/>
    </source>
</evidence>
<evidence type="ECO:0000250" key="2">
    <source>
        <dbReference type="UniProtKB" id="P35520"/>
    </source>
</evidence>
<evidence type="ECO:0000255" key="3">
    <source>
        <dbReference type="PROSITE-ProRule" id="PRU00703"/>
    </source>
</evidence>
<evidence type="ECO:0000256" key="4">
    <source>
        <dbReference type="SAM" id="MobiDB-lite"/>
    </source>
</evidence>
<evidence type="ECO:0000305" key="5"/>
<dbReference type="EC" id="4.2.1.22" evidence="2"/>
<dbReference type="EMBL" id="AF248039">
    <property type="protein sequence ID" value="AAF64226.1"/>
    <property type="molecule type" value="mRNA"/>
</dbReference>
<dbReference type="RefSeq" id="NP_001075551.1">
    <property type="nucleotide sequence ID" value="NM_001082082.2"/>
</dbReference>
<dbReference type="SMR" id="Q9N0V7"/>
<dbReference type="FunCoup" id="Q9N0V7">
    <property type="interactions" value="348"/>
</dbReference>
<dbReference type="STRING" id="9986.ENSOCUP00000034549"/>
<dbReference type="PaxDb" id="9986-ENSOCUP00000015163"/>
<dbReference type="GeneID" id="100008766"/>
<dbReference type="KEGG" id="ocu:100008766"/>
<dbReference type="CTD" id="875"/>
<dbReference type="eggNOG" id="KOG1252">
    <property type="taxonomic scope" value="Eukaryota"/>
</dbReference>
<dbReference type="InParanoid" id="Q9N0V7"/>
<dbReference type="OrthoDB" id="728at2759"/>
<dbReference type="UniPathway" id="UPA00136">
    <property type="reaction ID" value="UER00201"/>
</dbReference>
<dbReference type="Proteomes" id="UP000001811">
    <property type="component" value="Unplaced"/>
</dbReference>
<dbReference type="GO" id="GO:0005737">
    <property type="term" value="C:cytoplasm"/>
    <property type="evidence" value="ECO:0000250"/>
    <property type="project" value="UniProtKB"/>
</dbReference>
<dbReference type="GO" id="GO:0005634">
    <property type="term" value="C:nucleus"/>
    <property type="evidence" value="ECO:0000250"/>
    <property type="project" value="UniProtKB"/>
</dbReference>
<dbReference type="GO" id="GO:0004122">
    <property type="term" value="F:cystathionine beta-synthase activity"/>
    <property type="evidence" value="ECO:0000250"/>
    <property type="project" value="UniProtKB"/>
</dbReference>
<dbReference type="GO" id="GO:0046872">
    <property type="term" value="F:metal ion binding"/>
    <property type="evidence" value="ECO:0007669"/>
    <property type="project" value="UniProtKB-KW"/>
</dbReference>
<dbReference type="GO" id="GO:0042803">
    <property type="term" value="F:protein homodimerization activity"/>
    <property type="evidence" value="ECO:0000250"/>
    <property type="project" value="UniProtKB"/>
</dbReference>
<dbReference type="GO" id="GO:0030170">
    <property type="term" value="F:pyridoxal phosphate binding"/>
    <property type="evidence" value="ECO:0000250"/>
    <property type="project" value="UniProtKB"/>
</dbReference>
<dbReference type="GO" id="GO:0006535">
    <property type="term" value="P:cysteine biosynthetic process from serine"/>
    <property type="evidence" value="ECO:0007669"/>
    <property type="project" value="InterPro"/>
</dbReference>
<dbReference type="GO" id="GO:0019343">
    <property type="term" value="P:cysteine biosynthetic process via cystathionine"/>
    <property type="evidence" value="ECO:0007669"/>
    <property type="project" value="InterPro"/>
</dbReference>
<dbReference type="GO" id="GO:0043418">
    <property type="term" value="P:homocysteine catabolic process"/>
    <property type="evidence" value="ECO:0000250"/>
    <property type="project" value="UniProtKB"/>
</dbReference>
<dbReference type="GO" id="GO:0050667">
    <property type="term" value="P:homocysteine metabolic process"/>
    <property type="evidence" value="ECO:0000250"/>
    <property type="project" value="UniProtKB"/>
</dbReference>
<dbReference type="GO" id="GO:0070814">
    <property type="term" value="P:hydrogen sulfide biosynthetic process"/>
    <property type="evidence" value="ECO:0000250"/>
    <property type="project" value="UniProtKB"/>
</dbReference>
<dbReference type="GO" id="GO:0006563">
    <property type="term" value="P:L-serine metabolic process"/>
    <property type="evidence" value="ECO:0000250"/>
    <property type="project" value="UniProtKB"/>
</dbReference>
<dbReference type="CDD" id="cd01561">
    <property type="entry name" value="CBS_like"/>
    <property type="match status" value="1"/>
</dbReference>
<dbReference type="CDD" id="cd04608">
    <property type="entry name" value="CBS_pair_CBS"/>
    <property type="match status" value="1"/>
</dbReference>
<dbReference type="FunFam" id="3.10.580.10:FF:000014">
    <property type="entry name" value="Cystathionine beta-synthase"/>
    <property type="match status" value="1"/>
</dbReference>
<dbReference type="FunFam" id="3.40.50.1100:FF:000003">
    <property type="entry name" value="Cystathionine beta-synthase"/>
    <property type="match status" value="1"/>
</dbReference>
<dbReference type="FunFam" id="3.40.50.1100:FF:000118">
    <property type="entry name" value="Related to CYS4-cystathionine beta-synthase"/>
    <property type="match status" value="1"/>
</dbReference>
<dbReference type="Gene3D" id="3.40.50.1100">
    <property type="match status" value="2"/>
</dbReference>
<dbReference type="Gene3D" id="3.10.580.10">
    <property type="entry name" value="CBS-domain"/>
    <property type="match status" value="1"/>
</dbReference>
<dbReference type="InterPro" id="IPR046353">
    <property type="entry name" value="CBS_C"/>
</dbReference>
<dbReference type="InterPro" id="IPR000644">
    <property type="entry name" value="CBS_dom"/>
</dbReference>
<dbReference type="InterPro" id="IPR046342">
    <property type="entry name" value="CBS_dom_sf"/>
</dbReference>
<dbReference type="InterPro" id="IPR050214">
    <property type="entry name" value="Cys_Synth/Cystath_Beta-Synth"/>
</dbReference>
<dbReference type="InterPro" id="IPR005857">
    <property type="entry name" value="Cysta_beta_synth"/>
</dbReference>
<dbReference type="InterPro" id="IPR001216">
    <property type="entry name" value="P-phosphate_BS"/>
</dbReference>
<dbReference type="InterPro" id="IPR001926">
    <property type="entry name" value="TrpB-like_PALP"/>
</dbReference>
<dbReference type="InterPro" id="IPR036052">
    <property type="entry name" value="TrpB-like_PALP_sf"/>
</dbReference>
<dbReference type="NCBIfam" id="TIGR01137">
    <property type="entry name" value="cysta_beta"/>
    <property type="match status" value="1"/>
</dbReference>
<dbReference type="PANTHER" id="PTHR10314">
    <property type="entry name" value="CYSTATHIONINE BETA-SYNTHASE"/>
    <property type="match status" value="1"/>
</dbReference>
<dbReference type="Pfam" id="PF00571">
    <property type="entry name" value="CBS"/>
    <property type="match status" value="1"/>
</dbReference>
<dbReference type="Pfam" id="PF00291">
    <property type="entry name" value="PALP"/>
    <property type="match status" value="1"/>
</dbReference>
<dbReference type="SMART" id="SM00116">
    <property type="entry name" value="CBS"/>
    <property type="match status" value="1"/>
</dbReference>
<dbReference type="SUPFAM" id="SSF54631">
    <property type="entry name" value="CBS-domain pair"/>
    <property type="match status" value="1"/>
</dbReference>
<dbReference type="SUPFAM" id="SSF53686">
    <property type="entry name" value="Tryptophan synthase beta subunit-like PLP-dependent enzymes"/>
    <property type="match status" value="1"/>
</dbReference>
<dbReference type="PROSITE" id="PS51371">
    <property type="entry name" value="CBS"/>
    <property type="match status" value="1"/>
</dbReference>
<dbReference type="PROSITE" id="PS00901">
    <property type="entry name" value="CYS_SYNTHASE"/>
    <property type="match status" value="1"/>
</dbReference>
<proteinExistence type="evidence at transcript level"/>
<accession>Q9N0V7</accession>
<keyword id="KW-0028">Amino-acid biosynthesis</keyword>
<keyword id="KW-0129">CBS domain</keyword>
<keyword id="KW-0198">Cysteine biosynthesis</keyword>
<keyword id="KW-0963">Cytoplasm</keyword>
<keyword id="KW-0349">Heme</keyword>
<keyword id="KW-0408">Iron</keyword>
<keyword id="KW-1017">Isopeptide bond</keyword>
<keyword id="KW-0456">Lyase</keyword>
<keyword id="KW-0479">Metal-binding</keyword>
<keyword id="KW-0539">Nucleus</keyword>
<keyword id="KW-0597">Phosphoprotein</keyword>
<keyword id="KW-0663">Pyridoxal phosphate</keyword>
<keyword id="KW-1185">Reference proteome</keyword>
<keyword id="KW-0832">Ubl conjugation</keyword>
<reference key="1">
    <citation type="submission" date="2000-03" db="EMBL/GenBank/DDBJ databases">
        <title>Cloning and characterization of a cDNA clone of rabbit cystathionine beta synthase.</title>
        <authorList>
            <person name="Fujiwara K."/>
            <person name="Matsuda J."/>
            <person name="Tokunaga T."/>
        </authorList>
    </citation>
    <scope>NUCLEOTIDE SEQUENCE [MRNA]</scope>
    <source>
        <tissue>Liver</tissue>
    </source>
</reference>
<organism>
    <name type="scientific">Oryctolagus cuniculus</name>
    <name type="common">Rabbit</name>
    <dbReference type="NCBI Taxonomy" id="9986"/>
    <lineage>
        <taxon>Eukaryota</taxon>
        <taxon>Metazoa</taxon>
        <taxon>Chordata</taxon>
        <taxon>Craniata</taxon>
        <taxon>Vertebrata</taxon>
        <taxon>Euteleostomi</taxon>
        <taxon>Mammalia</taxon>
        <taxon>Eutheria</taxon>
        <taxon>Euarchontoglires</taxon>
        <taxon>Glires</taxon>
        <taxon>Lagomorpha</taxon>
        <taxon>Leporidae</taxon>
        <taxon>Oryctolagus</taxon>
    </lineage>
</organism>
<comment type="function">
    <text evidence="1 2">Hydro-lyase catalyzing the first step of the transsulfuration pathway, where the hydroxyl group of L-serine is displaced by L-homocysteine in a beta-replacement reaction to form L-cystathionine, the precursor of L-cysteine. This catabolic route allows the elimination of L-methionine and the toxic metabolite L-homocysteine (By similarity). Also involved in the production of hydrogen sulfide, a gasotransmitter with signaling and cytoprotective effects on neurons (By similarity).</text>
</comment>
<comment type="catalytic activity">
    <reaction evidence="2">
        <text>L-homocysteine + L-serine = L,L-cystathionine + H2O</text>
        <dbReference type="Rhea" id="RHEA:10112"/>
        <dbReference type="ChEBI" id="CHEBI:15377"/>
        <dbReference type="ChEBI" id="CHEBI:33384"/>
        <dbReference type="ChEBI" id="CHEBI:58161"/>
        <dbReference type="ChEBI" id="CHEBI:58199"/>
        <dbReference type="EC" id="4.2.1.22"/>
    </reaction>
</comment>
<comment type="cofactor">
    <cofactor evidence="2">
        <name>pyridoxal 5'-phosphate</name>
        <dbReference type="ChEBI" id="CHEBI:597326"/>
    </cofactor>
</comment>
<comment type="activity regulation">
    <text evidence="2">Allosterically activated by S-adenosyl-methionine/AdoMet. Activated by S-adenosylhomocysteine/AdoHcy. Binds non-covalently to a heme group that may control the redox sensitivity of the enzyme.</text>
</comment>
<comment type="pathway">
    <text evidence="2">Amino-acid biosynthesis; L-cysteine biosynthesis; L-cysteine from L-homocysteine and L-serine: step 1/2.</text>
</comment>
<comment type="subunit">
    <text evidence="2">Homotetramer.</text>
</comment>
<comment type="subcellular location">
    <subcellularLocation>
        <location evidence="2">Cytoplasm</location>
    </subcellularLocation>
    <subcellularLocation>
        <location evidence="2">Nucleus</location>
    </subcellularLocation>
</comment>
<comment type="similarity">
    <text evidence="5">Belongs to the cysteine synthase/cystathionine beta-synthase family.</text>
</comment>
<protein>
    <recommendedName>
        <fullName evidence="5">Cystathionine beta-synthase</fullName>
        <ecNumber evidence="2">4.2.1.22</ecNumber>
    </recommendedName>
    <alternativeName>
        <fullName>Beta-thionase</fullName>
    </alternativeName>
    <alternativeName>
        <fullName>Serine sulfhydrase</fullName>
    </alternativeName>
</protein>
<feature type="chain" id="PRO_0000263004" description="Cystathionine beta-synthase">
    <location>
        <begin position="1"/>
        <end position="551"/>
    </location>
</feature>
<feature type="domain" description="CBS" evidence="3">
    <location>
        <begin position="418"/>
        <end position="476"/>
    </location>
</feature>
<feature type="region of interest" description="Disordered" evidence="4">
    <location>
        <begin position="1"/>
        <end position="41"/>
    </location>
</feature>
<feature type="binding site" description="axial binding residue" evidence="2">
    <location>
        <position position="52"/>
    </location>
    <ligand>
        <name>heme</name>
        <dbReference type="ChEBI" id="CHEBI:30413"/>
    </ligand>
    <ligandPart>
        <name>Fe</name>
        <dbReference type="ChEBI" id="CHEBI:18248"/>
    </ligandPart>
</feature>
<feature type="binding site" description="axial binding residue" evidence="2">
    <location>
        <position position="65"/>
    </location>
    <ligand>
        <name>heme</name>
        <dbReference type="ChEBI" id="CHEBI:30413"/>
    </ligand>
    <ligandPart>
        <name>Fe</name>
        <dbReference type="ChEBI" id="CHEBI:18248"/>
    </ligandPart>
</feature>
<feature type="binding site" evidence="2">
    <location>
        <position position="149"/>
    </location>
    <ligand>
        <name>pyridoxal 5'-phosphate</name>
        <dbReference type="ChEBI" id="CHEBI:597326"/>
    </ligand>
</feature>
<feature type="binding site" evidence="2">
    <location>
        <begin position="256"/>
        <end position="260"/>
    </location>
    <ligand>
        <name>pyridoxal 5'-phosphate</name>
        <dbReference type="ChEBI" id="CHEBI:597326"/>
    </ligand>
</feature>
<feature type="binding site" evidence="2">
    <location>
        <position position="349"/>
    </location>
    <ligand>
        <name>pyridoxal 5'-phosphate</name>
        <dbReference type="ChEBI" id="CHEBI:597326"/>
    </ligand>
</feature>
<feature type="modified residue" description="Phosphoserine" evidence="2">
    <location>
        <position position="27"/>
    </location>
</feature>
<feature type="modified residue" description="N6-(pyridoxal phosphate)lysine" evidence="2">
    <location>
        <position position="119"/>
    </location>
</feature>
<feature type="modified residue" description="Phosphoserine" evidence="2">
    <location>
        <position position="199"/>
    </location>
</feature>
<feature type="cross-link" description="Glycyl lysine isopeptide (Lys-Gly) (interchain with G-Cter in SUMO)" evidence="2">
    <location>
        <position position="211"/>
    </location>
</feature>
<gene>
    <name type="primary">CBS</name>
</gene>